<sequence length="396" mass="43806">MAKAKFQRTKPHVNIGTIGHVDHGKTTLTAAITKVLHDKYPELNESRAFDQIDNAPEERQRGITINISHVEYQTEKRHYAHVDAPGHADYIKNMITGAAQMDGAILVVAATDGPMPQTREHVLLARQVGVPYILVALNKSDAVDDEELLELVEMEVRELLAAQEFDEDAPVVRVSALKALEGDPKWVESVEQLMDAVDESIPDPVRETDRPFLMPVEDVFTITGRGTVVTGRVERGIINVNEEVEIVGIRPTSTKTTVTGVEMFRKLLDQGQAGDNVGLLLRGIKREDVERGQVVVKPGTTTPHTEFEGQVYILSKDEGGRHTPFFNNYRPQFYFRTTDVTGVVTLPEGTEMVMPGDNTNISVKLIQPVAMDDGLRFAIREGGRTVGAGRVVKIIK</sequence>
<proteinExistence type="inferred from homology"/>
<protein>
    <recommendedName>
        <fullName evidence="2">Elongation factor Tu</fullName>
        <shortName evidence="2">EF-Tu</shortName>
        <ecNumber evidence="2">3.6.5.3</ecNumber>
    </recommendedName>
</protein>
<evidence type="ECO:0000250" key="1"/>
<evidence type="ECO:0000255" key="2">
    <source>
        <dbReference type="HAMAP-Rule" id="MF_00118"/>
    </source>
</evidence>
<gene>
    <name evidence="2" type="primary">tuf</name>
    <name type="ordered locus">MUL_0766</name>
</gene>
<organism>
    <name type="scientific">Mycobacterium ulcerans (strain Agy99)</name>
    <dbReference type="NCBI Taxonomy" id="362242"/>
    <lineage>
        <taxon>Bacteria</taxon>
        <taxon>Bacillati</taxon>
        <taxon>Actinomycetota</taxon>
        <taxon>Actinomycetes</taxon>
        <taxon>Mycobacteriales</taxon>
        <taxon>Mycobacteriaceae</taxon>
        <taxon>Mycobacterium</taxon>
        <taxon>Mycobacterium ulcerans group</taxon>
    </lineage>
</organism>
<dbReference type="EC" id="3.6.5.3" evidence="2"/>
<dbReference type="EMBL" id="CP000325">
    <property type="protein sequence ID" value="ABL03411.1"/>
    <property type="molecule type" value="Genomic_DNA"/>
</dbReference>
<dbReference type="RefSeq" id="WP_011739036.1">
    <property type="nucleotide sequence ID" value="NC_008611.1"/>
</dbReference>
<dbReference type="SMR" id="A0PM42"/>
<dbReference type="GeneID" id="93438622"/>
<dbReference type="KEGG" id="mul:MUL_0766"/>
<dbReference type="eggNOG" id="COG0050">
    <property type="taxonomic scope" value="Bacteria"/>
</dbReference>
<dbReference type="HOGENOM" id="CLU_007265_0_1_11"/>
<dbReference type="Proteomes" id="UP000000765">
    <property type="component" value="Chromosome"/>
</dbReference>
<dbReference type="GO" id="GO:0005829">
    <property type="term" value="C:cytosol"/>
    <property type="evidence" value="ECO:0007669"/>
    <property type="project" value="TreeGrafter"/>
</dbReference>
<dbReference type="GO" id="GO:0005525">
    <property type="term" value="F:GTP binding"/>
    <property type="evidence" value="ECO:0007669"/>
    <property type="project" value="UniProtKB-UniRule"/>
</dbReference>
<dbReference type="GO" id="GO:0003924">
    <property type="term" value="F:GTPase activity"/>
    <property type="evidence" value="ECO:0007669"/>
    <property type="project" value="InterPro"/>
</dbReference>
<dbReference type="GO" id="GO:0003746">
    <property type="term" value="F:translation elongation factor activity"/>
    <property type="evidence" value="ECO:0007669"/>
    <property type="project" value="UniProtKB-UniRule"/>
</dbReference>
<dbReference type="CDD" id="cd01884">
    <property type="entry name" value="EF_Tu"/>
    <property type="match status" value="1"/>
</dbReference>
<dbReference type="CDD" id="cd03697">
    <property type="entry name" value="EFTU_II"/>
    <property type="match status" value="1"/>
</dbReference>
<dbReference type="CDD" id="cd03707">
    <property type="entry name" value="EFTU_III"/>
    <property type="match status" value="1"/>
</dbReference>
<dbReference type="FunFam" id="2.40.30.10:FF:000001">
    <property type="entry name" value="Elongation factor Tu"/>
    <property type="match status" value="1"/>
</dbReference>
<dbReference type="FunFam" id="3.40.50.300:FF:000003">
    <property type="entry name" value="Elongation factor Tu"/>
    <property type="match status" value="1"/>
</dbReference>
<dbReference type="Gene3D" id="3.40.50.300">
    <property type="entry name" value="P-loop containing nucleotide triphosphate hydrolases"/>
    <property type="match status" value="1"/>
</dbReference>
<dbReference type="Gene3D" id="2.40.30.10">
    <property type="entry name" value="Translation factors"/>
    <property type="match status" value="2"/>
</dbReference>
<dbReference type="HAMAP" id="MF_00118_B">
    <property type="entry name" value="EF_Tu_B"/>
    <property type="match status" value="1"/>
</dbReference>
<dbReference type="InterPro" id="IPR041709">
    <property type="entry name" value="EF-Tu_GTP-bd"/>
</dbReference>
<dbReference type="InterPro" id="IPR050055">
    <property type="entry name" value="EF-Tu_GTPase"/>
</dbReference>
<dbReference type="InterPro" id="IPR004161">
    <property type="entry name" value="EFTu-like_2"/>
</dbReference>
<dbReference type="InterPro" id="IPR033720">
    <property type="entry name" value="EFTU_2"/>
</dbReference>
<dbReference type="InterPro" id="IPR031157">
    <property type="entry name" value="G_TR_CS"/>
</dbReference>
<dbReference type="InterPro" id="IPR027417">
    <property type="entry name" value="P-loop_NTPase"/>
</dbReference>
<dbReference type="InterPro" id="IPR005225">
    <property type="entry name" value="Small_GTP-bd"/>
</dbReference>
<dbReference type="InterPro" id="IPR000795">
    <property type="entry name" value="T_Tr_GTP-bd_dom"/>
</dbReference>
<dbReference type="InterPro" id="IPR009000">
    <property type="entry name" value="Transl_B-barrel_sf"/>
</dbReference>
<dbReference type="InterPro" id="IPR009001">
    <property type="entry name" value="Transl_elong_EF1A/Init_IF2_C"/>
</dbReference>
<dbReference type="InterPro" id="IPR004541">
    <property type="entry name" value="Transl_elong_EFTu/EF1A_bac/org"/>
</dbReference>
<dbReference type="InterPro" id="IPR004160">
    <property type="entry name" value="Transl_elong_EFTu/EF1A_C"/>
</dbReference>
<dbReference type="NCBIfam" id="TIGR00485">
    <property type="entry name" value="EF-Tu"/>
    <property type="match status" value="1"/>
</dbReference>
<dbReference type="NCBIfam" id="NF000766">
    <property type="entry name" value="PRK00049.1"/>
    <property type="match status" value="1"/>
</dbReference>
<dbReference type="NCBIfam" id="NF009372">
    <property type="entry name" value="PRK12735.1"/>
    <property type="match status" value="1"/>
</dbReference>
<dbReference type="NCBIfam" id="NF009373">
    <property type="entry name" value="PRK12736.1"/>
    <property type="match status" value="1"/>
</dbReference>
<dbReference type="NCBIfam" id="TIGR00231">
    <property type="entry name" value="small_GTP"/>
    <property type="match status" value="1"/>
</dbReference>
<dbReference type="PANTHER" id="PTHR43721:SF22">
    <property type="entry name" value="ELONGATION FACTOR TU, MITOCHONDRIAL"/>
    <property type="match status" value="1"/>
</dbReference>
<dbReference type="PANTHER" id="PTHR43721">
    <property type="entry name" value="ELONGATION FACTOR TU-RELATED"/>
    <property type="match status" value="1"/>
</dbReference>
<dbReference type="Pfam" id="PF00009">
    <property type="entry name" value="GTP_EFTU"/>
    <property type="match status" value="1"/>
</dbReference>
<dbReference type="Pfam" id="PF03144">
    <property type="entry name" value="GTP_EFTU_D2"/>
    <property type="match status" value="1"/>
</dbReference>
<dbReference type="Pfam" id="PF03143">
    <property type="entry name" value="GTP_EFTU_D3"/>
    <property type="match status" value="1"/>
</dbReference>
<dbReference type="PRINTS" id="PR00315">
    <property type="entry name" value="ELONGATNFCT"/>
</dbReference>
<dbReference type="SUPFAM" id="SSF50465">
    <property type="entry name" value="EF-Tu/eEF-1alpha/eIF2-gamma C-terminal domain"/>
    <property type="match status" value="1"/>
</dbReference>
<dbReference type="SUPFAM" id="SSF52540">
    <property type="entry name" value="P-loop containing nucleoside triphosphate hydrolases"/>
    <property type="match status" value="1"/>
</dbReference>
<dbReference type="SUPFAM" id="SSF50447">
    <property type="entry name" value="Translation proteins"/>
    <property type="match status" value="1"/>
</dbReference>
<dbReference type="PROSITE" id="PS00301">
    <property type="entry name" value="G_TR_1"/>
    <property type="match status" value="1"/>
</dbReference>
<dbReference type="PROSITE" id="PS51722">
    <property type="entry name" value="G_TR_2"/>
    <property type="match status" value="1"/>
</dbReference>
<accession>A0PM42</accession>
<reference key="1">
    <citation type="journal article" date="2007" name="Genome Res.">
        <title>Reductive evolution and niche adaptation inferred from the genome of Mycobacterium ulcerans, the causative agent of Buruli ulcer.</title>
        <authorList>
            <person name="Stinear T.P."/>
            <person name="Seemann T."/>
            <person name="Pidot S."/>
            <person name="Frigui W."/>
            <person name="Reysset G."/>
            <person name="Garnier T."/>
            <person name="Meurice G."/>
            <person name="Simon D."/>
            <person name="Bouchier C."/>
            <person name="Ma L."/>
            <person name="Tichit M."/>
            <person name="Porter J.L."/>
            <person name="Ryan J."/>
            <person name="Johnson P.D.R."/>
            <person name="Davies J.K."/>
            <person name="Jenkin G.A."/>
            <person name="Small P.L.C."/>
            <person name="Jones L.M."/>
            <person name="Tekaia F."/>
            <person name="Laval F."/>
            <person name="Daffe M."/>
            <person name="Parkhill J."/>
            <person name="Cole S.T."/>
        </authorList>
    </citation>
    <scope>NUCLEOTIDE SEQUENCE [LARGE SCALE GENOMIC DNA]</scope>
    <source>
        <strain>Agy99</strain>
    </source>
</reference>
<comment type="function">
    <text evidence="2">GTP hydrolase that promotes the GTP-dependent binding of aminoacyl-tRNA to the A-site of ribosomes during protein biosynthesis.</text>
</comment>
<comment type="catalytic activity">
    <reaction evidence="2">
        <text>GTP + H2O = GDP + phosphate + H(+)</text>
        <dbReference type="Rhea" id="RHEA:19669"/>
        <dbReference type="ChEBI" id="CHEBI:15377"/>
        <dbReference type="ChEBI" id="CHEBI:15378"/>
        <dbReference type="ChEBI" id="CHEBI:37565"/>
        <dbReference type="ChEBI" id="CHEBI:43474"/>
        <dbReference type="ChEBI" id="CHEBI:58189"/>
        <dbReference type="EC" id="3.6.5.3"/>
    </reaction>
    <physiologicalReaction direction="left-to-right" evidence="2">
        <dbReference type="Rhea" id="RHEA:19670"/>
    </physiologicalReaction>
</comment>
<comment type="subunit">
    <text evidence="2">Monomer.</text>
</comment>
<comment type="subcellular location">
    <subcellularLocation>
        <location evidence="2">Cytoplasm</location>
    </subcellularLocation>
</comment>
<comment type="similarity">
    <text evidence="2">Belongs to the TRAFAC class translation factor GTPase superfamily. Classic translation factor GTPase family. EF-Tu/EF-1A subfamily.</text>
</comment>
<keyword id="KW-0963">Cytoplasm</keyword>
<keyword id="KW-0251">Elongation factor</keyword>
<keyword id="KW-0342">GTP-binding</keyword>
<keyword id="KW-0378">Hydrolase</keyword>
<keyword id="KW-0460">Magnesium</keyword>
<keyword id="KW-0479">Metal-binding</keyword>
<keyword id="KW-0547">Nucleotide-binding</keyword>
<keyword id="KW-0648">Protein biosynthesis</keyword>
<name>EFTU_MYCUA</name>
<feature type="chain" id="PRO_1000015708" description="Elongation factor Tu">
    <location>
        <begin position="1"/>
        <end position="396"/>
    </location>
</feature>
<feature type="domain" description="tr-type G">
    <location>
        <begin position="10"/>
        <end position="205"/>
    </location>
</feature>
<feature type="region of interest" description="G1" evidence="1">
    <location>
        <begin position="19"/>
        <end position="26"/>
    </location>
</feature>
<feature type="region of interest" description="G2" evidence="1">
    <location>
        <begin position="62"/>
        <end position="66"/>
    </location>
</feature>
<feature type="region of interest" description="G3" evidence="1">
    <location>
        <begin position="83"/>
        <end position="86"/>
    </location>
</feature>
<feature type="region of interest" description="G4" evidence="1">
    <location>
        <begin position="138"/>
        <end position="141"/>
    </location>
</feature>
<feature type="region of interest" description="G5" evidence="1">
    <location>
        <begin position="175"/>
        <end position="177"/>
    </location>
</feature>
<feature type="binding site" evidence="2">
    <location>
        <begin position="19"/>
        <end position="26"/>
    </location>
    <ligand>
        <name>GTP</name>
        <dbReference type="ChEBI" id="CHEBI:37565"/>
    </ligand>
</feature>
<feature type="binding site" evidence="2">
    <location>
        <position position="26"/>
    </location>
    <ligand>
        <name>Mg(2+)</name>
        <dbReference type="ChEBI" id="CHEBI:18420"/>
    </ligand>
</feature>
<feature type="binding site" evidence="2">
    <location>
        <begin position="83"/>
        <end position="87"/>
    </location>
    <ligand>
        <name>GTP</name>
        <dbReference type="ChEBI" id="CHEBI:37565"/>
    </ligand>
</feature>
<feature type="binding site" evidence="2">
    <location>
        <begin position="138"/>
        <end position="141"/>
    </location>
    <ligand>
        <name>GTP</name>
        <dbReference type="ChEBI" id="CHEBI:37565"/>
    </ligand>
</feature>